<feature type="initiator methionine" description="Removed" evidence="1">
    <location>
        <position position="1"/>
    </location>
</feature>
<feature type="chain" id="PRO_0000160045" description="Superoxide dismutase [Mn]">
    <location>
        <begin position="2"/>
        <end position="207"/>
    </location>
</feature>
<feature type="binding site" evidence="1">
    <location>
        <position position="28"/>
    </location>
    <ligand>
        <name>Mn(2+)</name>
        <dbReference type="ChEBI" id="CHEBI:29035"/>
    </ligand>
</feature>
<feature type="binding site" evidence="1">
    <location>
        <position position="76"/>
    </location>
    <ligand>
        <name>Mn(2+)</name>
        <dbReference type="ChEBI" id="CHEBI:29035"/>
    </ligand>
</feature>
<feature type="binding site" evidence="1">
    <location>
        <position position="160"/>
    </location>
    <ligand>
        <name>Mn(2+)</name>
        <dbReference type="ChEBI" id="CHEBI:29035"/>
    </ligand>
</feature>
<feature type="binding site" evidence="1">
    <location>
        <position position="164"/>
    </location>
    <ligand>
        <name>Mn(2+)</name>
        <dbReference type="ChEBI" id="CHEBI:29035"/>
    </ligand>
</feature>
<protein>
    <recommendedName>
        <fullName>Superoxide dismutase [Mn]</fullName>
        <ecNumber>1.15.1.1</ecNumber>
    </recommendedName>
</protein>
<accession>P47201</accession>
<keyword id="KW-0464">Manganese</keyword>
<keyword id="KW-0479">Metal-binding</keyword>
<keyword id="KW-0560">Oxidoreductase</keyword>
<proteinExistence type="inferred from homology"/>
<comment type="function">
    <text>Destroys superoxide anion radicals which are normally produced within the cells and which are toxic to biological systems.</text>
</comment>
<comment type="catalytic activity">
    <reaction>
        <text>2 superoxide + 2 H(+) = H2O2 + O2</text>
        <dbReference type="Rhea" id="RHEA:20696"/>
        <dbReference type="ChEBI" id="CHEBI:15378"/>
        <dbReference type="ChEBI" id="CHEBI:15379"/>
        <dbReference type="ChEBI" id="CHEBI:16240"/>
        <dbReference type="ChEBI" id="CHEBI:18421"/>
        <dbReference type="EC" id="1.15.1.1"/>
    </reaction>
</comment>
<comment type="cofactor">
    <cofactor evidence="1">
        <name>Mn(2+)</name>
        <dbReference type="ChEBI" id="CHEBI:29035"/>
    </cofactor>
    <text evidence="1">Binds 1 Mn(2+) ion per subunit.</text>
</comment>
<comment type="similarity">
    <text evidence="2">Belongs to the iron/manganese superoxide dismutase family.</text>
</comment>
<dbReference type="EC" id="1.15.1.1"/>
<dbReference type="EMBL" id="U11550">
    <property type="protein sequence ID" value="AAB08770.1"/>
    <property type="molecule type" value="Genomic_DNA"/>
</dbReference>
<dbReference type="RefSeq" id="WP_003872294.1">
    <property type="nucleotide sequence ID" value="NZ_NSFM01000001.1"/>
</dbReference>
<dbReference type="SMR" id="P47201"/>
<dbReference type="OrthoDB" id="9803125at2"/>
<dbReference type="GO" id="GO:0046872">
    <property type="term" value="F:metal ion binding"/>
    <property type="evidence" value="ECO:0007669"/>
    <property type="project" value="UniProtKB-KW"/>
</dbReference>
<dbReference type="GO" id="GO:0004784">
    <property type="term" value="F:superoxide dismutase activity"/>
    <property type="evidence" value="ECO:0007669"/>
    <property type="project" value="UniProtKB-EC"/>
</dbReference>
<dbReference type="FunFam" id="1.10.287.990:FF:000001">
    <property type="entry name" value="Superoxide dismutase"/>
    <property type="match status" value="1"/>
</dbReference>
<dbReference type="FunFam" id="3.55.40.20:FF:000004">
    <property type="entry name" value="Superoxide dismutase [Fe]"/>
    <property type="match status" value="1"/>
</dbReference>
<dbReference type="Gene3D" id="1.10.287.990">
    <property type="entry name" value="Fe,Mn superoxide dismutase (SOD) domain"/>
    <property type="match status" value="1"/>
</dbReference>
<dbReference type="Gene3D" id="3.55.40.20">
    <property type="entry name" value="Iron/manganese superoxide dismutase, C-terminal domain"/>
    <property type="match status" value="1"/>
</dbReference>
<dbReference type="InterPro" id="IPR050265">
    <property type="entry name" value="Fe/Mn_Superoxide_Dismutase"/>
</dbReference>
<dbReference type="InterPro" id="IPR001189">
    <property type="entry name" value="Mn/Fe_SOD"/>
</dbReference>
<dbReference type="InterPro" id="IPR019833">
    <property type="entry name" value="Mn/Fe_SOD_BS"/>
</dbReference>
<dbReference type="InterPro" id="IPR019832">
    <property type="entry name" value="Mn/Fe_SOD_C"/>
</dbReference>
<dbReference type="InterPro" id="IPR019831">
    <property type="entry name" value="Mn/Fe_SOD_N"/>
</dbReference>
<dbReference type="InterPro" id="IPR036324">
    <property type="entry name" value="Mn/Fe_SOD_N_sf"/>
</dbReference>
<dbReference type="InterPro" id="IPR036314">
    <property type="entry name" value="SOD_C_sf"/>
</dbReference>
<dbReference type="PANTHER" id="PTHR11404">
    <property type="entry name" value="SUPEROXIDE DISMUTASE 2"/>
    <property type="match status" value="1"/>
</dbReference>
<dbReference type="PANTHER" id="PTHR11404:SF6">
    <property type="entry name" value="SUPEROXIDE DISMUTASE [MN], MITOCHONDRIAL"/>
    <property type="match status" value="1"/>
</dbReference>
<dbReference type="Pfam" id="PF02777">
    <property type="entry name" value="Sod_Fe_C"/>
    <property type="match status" value="1"/>
</dbReference>
<dbReference type="Pfam" id="PF00081">
    <property type="entry name" value="Sod_Fe_N"/>
    <property type="match status" value="1"/>
</dbReference>
<dbReference type="PIRSF" id="PIRSF000349">
    <property type="entry name" value="SODismutase"/>
    <property type="match status" value="1"/>
</dbReference>
<dbReference type="PRINTS" id="PR01703">
    <property type="entry name" value="MNSODISMTASE"/>
</dbReference>
<dbReference type="SUPFAM" id="SSF54719">
    <property type="entry name" value="Fe,Mn superoxide dismutase (SOD), C-terminal domain"/>
    <property type="match status" value="1"/>
</dbReference>
<dbReference type="SUPFAM" id="SSF46609">
    <property type="entry name" value="Fe,Mn superoxide dismutase (SOD), N-terminal domain"/>
    <property type="match status" value="1"/>
</dbReference>
<dbReference type="PROSITE" id="PS00088">
    <property type="entry name" value="SOD_MN"/>
    <property type="match status" value="1"/>
</dbReference>
<name>SODM_MYCAV</name>
<sequence length="207" mass="23044">MAEYTLPDLDWDYAALEPHISGQINEIHHTKHHATYVKGVNDALAKLEEARANEDHAAIFLNEKNLAFHLGGHVNHSIWWKNLSPDGGDKPTGELAAAIDDAFGSFDKFRAQFSAAANGLQGSGWAVLGYDTLGSRLLTFQLYDQQANVPLGIIPLLQVDMWEHAFYLQYKNVKADYVKAFWNVVNWADVQKRYAAATSKAQGLIFG</sequence>
<gene>
    <name type="primary">sodA</name>
    <name type="synonym">sod</name>
</gene>
<organism>
    <name type="scientific">Mycobacterium avium</name>
    <dbReference type="NCBI Taxonomy" id="1764"/>
    <lineage>
        <taxon>Bacteria</taxon>
        <taxon>Bacillati</taxon>
        <taxon>Actinomycetota</taxon>
        <taxon>Actinomycetes</taxon>
        <taxon>Mycobacteriales</taxon>
        <taxon>Mycobacteriaceae</taxon>
        <taxon>Mycobacterium</taxon>
        <taxon>Mycobacterium avium complex (MAC)</taxon>
    </lineage>
</organism>
<evidence type="ECO:0000250" key="1"/>
<evidence type="ECO:0000305" key="2"/>
<reference key="1">
    <citation type="journal article" date="1996" name="Microb. Pathog.">
        <title>Molecular characterization of a surface-exposed superoxide dismutase of Mycobacterium avium.</title>
        <authorList>
            <person name="Escuyer V.E."/>
            <person name="Haddad N."/>
            <person name="Frehel C."/>
            <person name="Berche P."/>
        </authorList>
    </citation>
    <scope>NUCLEOTIDE SEQUENCE [GENOMIC DNA]</scope>
    <source>
        <strain>ATCC 25291 / DSM 44156 / NCTC 13034 / TMC 724</strain>
    </source>
</reference>